<proteinExistence type="inferred from homology"/>
<evidence type="ECO:0000250" key="1"/>
<evidence type="ECO:0000255" key="2"/>
<evidence type="ECO:0000305" key="3"/>
<organism>
    <name type="scientific">Arabidopsis thaliana</name>
    <name type="common">Mouse-ear cress</name>
    <dbReference type="NCBI Taxonomy" id="3702"/>
    <lineage>
        <taxon>Eukaryota</taxon>
        <taxon>Viridiplantae</taxon>
        <taxon>Streptophyta</taxon>
        <taxon>Embryophyta</taxon>
        <taxon>Tracheophyta</taxon>
        <taxon>Spermatophyta</taxon>
        <taxon>Magnoliopsida</taxon>
        <taxon>eudicotyledons</taxon>
        <taxon>Gunneridae</taxon>
        <taxon>Pentapetalae</taxon>
        <taxon>rosids</taxon>
        <taxon>malvids</taxon>
        <taxon>Brassicales</taxon>
        <taxon>Brassicaceae</taxon>
        <taxon>Camelineae</taxon>
        <taxon>Arabidopsis</taxon>
    </lineage>
</organism>
<comment type="function">
    <text evidence="1">Plant non-specific lipid-transfer proteins transfer phospholipids as well as galactolipids across membranes. May play a role in wax or cutin deposition in the cell walls of expanding epidermal cells and certain secretory tissues (By similarity).</text>
</comment>
<comment type="similarity">
    <text evidence="3">Belongs to the plant LTP family.</text>
</comment>
<accession>Q9S7I3</accession>
<accession>Q3C1C6</accession>
<accession>Q41935</accession>
<accession>Q43277</accession>
<accession>Q43280</accession>
<name>NLTP2_ARATH</name>
<feature type="signal peptide" evidence="2">
    <location>
        <begin position="1"/>
        <end position="25"/>
    </location>
</feature>
<feature type="chain" id="PRO_0000018362" description="Non-specific lipid-transfer protein 2">
    <location>
        <begin position="26"/>
        <end position="118"/>
    </location>
</feature>
<feature type="disulfide bond" evidence="2">
    <location>
        <begin position="29"/>
        <end position="76"/>
    </location>
</feature>
<feature type="disulfide bond" evidence="2">
    <location>
        <begin position="39"/>
        <end position="53"/>
    </location>
</feature>
<feature type="disulfide bond" evidence="2">
    <location>
        <begin position="54"/>
        <end position="100"/>
    </location>
</feature>
<feature type="disulfide bond" evidence="2">
    <location>
        <begin position="74"/>
        <end position="114"/>
    </location>
</feature>
<feature type="sequence conflict" description="In Ref. 8; CAA79122." evidence="3" ref="8">
    <original>D</original>
    <variation>N</variation>
    <location>
        <position position="69"/>
    </location>
</feature>
<dbReference type="EMBL" id="AF057357">
    <property type="protein sequence ID" value="AAC24829.1"/>
    <property type="molecule type" value="Genomic_DNA"/>
</dbReference>
<dbReference type="EMBL" id="AF159799">
    <property type="protein sequence ID" value="AAF76928.1"/>
    <property type="molecule type" value="mRNA"/>
</dbReference>
<dbReference type="EMBL" id="AB238795">
    <property type="protein sequence ID" value="BAE46870.1"/>
    <property type="molecule type" value="mRNA"/>
</dbReference>
<dbReference type="EMBL" id="AC005499">
    <property type="protein sequence ID" value="AAC67365.1"/>
    <property type="molecule type" value="Genomic_DNA"/>
</dbReference>
<dbReference type="EMBL" id="CP002685">
    <property type="protein sequence ID" value="AEC09546.1"/>
    <property type="molecule type" value="Genomic_DNA"/>
</dbReference>
<dbReference type="EMBL" id="AY059927">
    <property type="protein sequence ID" value="AAL24409.1"/>
    <property type="molecule type" value="mRNA"/>
</dbReference>
<dbReference type="EMBL" id="AY081562">
    <property type="protein sequence ID" value="AAM10124.1"/>
    <property type="molecule type" value="mRNA"/>
</dbReference>
<dbReference type="EMBL" id="AY085800">
    <property type="protein sequence ID" value="AAM63016.1"/>
    <property type="molecule type" value="mRNA"/>
</dbReference>
<dbReference type="EMBL" id="Z17770">
    <property type="protein sequence ID" value="CAA79060.1"/>
    <property type="molecule type" value="mRNA"/>
</dbReference>
<dbReference type="EMBL" id="Z17787">
    <property type="protein sequence ID" value="CAA79068.1"/>
    <property type="molecule type" value="mRNA"/>
</dbReference>
<dbReference type="EMBL" id="Z18168">
    <property type="protein sequence ID" value="CAA79122.1"/>
    <property type="molecule type" value="mRNA"/>
</dbReference>
<dbReference type="PIR" id="B84806">
    <property type="entry name" value="B84806"/>
</dbReference>
<dbReference type="RefSeq" id="NP_181387.1">
    <property type="nucleotide sequence ID" value="NM_129410.5"/>
</dbReference>
<dbReference type="SMR" id="Q9S7I3"/>
<dbReference type="BioGRID" id="3777">
    <property type="interactions" value="2"/>
</dbReference>
<dbReference type="FunCoup" id="Q9S7I3">
    <property type="interactions" value="280"/>
</dbReference>
<dbReference type="STRING" id="3702.Q9S7I3"/>
<dbReference type="Allergome" id="1085">
    <property type="allergen name" value="Ara t 3"/>
</dbReference>
<dbReference type="PaxDb" id="3702-AT2G38530.1"/>
<dbReference type="ProteomicsDB" id="250537"/>
<dbReference type="EnsemblPlants" id="AT2G38530.1">
    <property type="protein sequence ID" value="AT2G38530.1"/>
    <property type="gene ID" value="AT2G38530"/>
</dbReference>
<dbReference type="GeneID" id="818435"/>
<dbReference type="Gramene" id="AT2G38530.1">
    <property type="protein sequence ID" value="AT2G38530.1"/>
    <property type="gene ID" value="AT2G38530"/>
</dbReference>
<dbReference type="KEGG" id="ath:AT2G38530"/>
<dbReference type="Araport" id="AT2G38530"/>
<dbReference type="TAIR" id="AT2G38530">
    <property type="gene designation" value="LTP2"/>
</dbReference>
<dbReference type="eggNOG" id="ENOG502S4CI">
    <property type="taxonomic scope" value="Eukaryota"/>
</dbReference>
<dbReference type="HOGENOM" id="CLU_128423_0_0_1"/>
<dbReference type="InParanoid" id="Q9S7I3"/>
<dbReference type="OMA" id="CMKSTAN"/>
<dbReference type="OrthoDB" id="1890443at2759"/>
<dbReference type="PhylomeDB" id="Q9S7I3"/>
<dbReference type="PRO" id="PR:Q9S7I3"/>
<dbReference type="Proteomes" id="UP000006548">
    <property type="component" value="Chromosome 2"/>
</dbReference>
<dbReference type="ExpressionAtlas" id="Q9S7I3">
    <property type="expression patterns" value="baseline and differential"/>
</dbReference>
<dbReference type="GO" id="GO:0009507">
    <property type="term" value="C:chloroplast"/>
    <property type="evidence" value="ECO:0000314"/>
    <property type="project" value="TAIR"/>
</dbReference>
<dbReference type="GO" id="GO:0005768">
    <property type="term" value="C:endosome"/>
    <property type="evidence" value="ECO:0007005"/>
    <property type="project" value="TAIR"/>
</dbReference>
<dbReference type="GO" id="GO:0005794">
    <property type="term" value="C:Golgi apparatus"/>
    <property type="evidence" value="ECO:0007005"/>
    <property type="project" value="TAIR"/>
</dbReference>
<dbReference type="GO" id="GO:0009505">
    <property type="term" value="C:plant-type cell wall"/>
    <property type="evidence" value="ECO:0000314"/>
    <property type="project" value="TAIR"/>
</dbReference>
<dbReference type="GO" id="GO:0005886">
    <property type="term" value="C:plasma membrane"/>
    <property type="evidence" value="ECO:0007005"/>
    <property type="project" value="TAIR"/>
</dbReference>
<dbReference type="GO" id="GO:0005802">
    <property type="term" value="C:trans-Golgi network"/>
    <property type="evidence" value="ECO:0007005"/>
    <property type="project" value="TAIR"/>
</dbReference>
<dbReference type="GO" id="GO:0008289">
    <property type="term" value="F:lipid binding"/>
    <property type="evidence" value="ECO:0007669"/>
    <property type="project" value="UniProtKB-KW"/>
</dbReference>
<dbReference type="GO" id="GO:0042335">
    <property type="term" value="P:cuticle development"/>
    <property type="evidence" value="ECO:0000315"/>
    <property type="project" value="TAIR"/>
</dbReference>
<dbReference type="GO" id="GO:0006649">
    <property type="term" value="P:phospholipid transfer to membrane"/>
    <property type="evidence" value="ECO:0000303"/>
    <property type="project" value="TAIR"/>
</dbReference>
<dbReference type="GO" id="GO:0090627">
    <property type="term" value="P:plant epidermal cell differentiation"/>
    <property type="evidence" value="ECO:0000315"/>
    <property type="project" value="TAIR"/>
</dbReference>
<dbReference type="GO" id="GO:1901957">
    <property type="term" value="P:regulation of cutin biosynthetic process"/>
    <property type="evidence" value="ECO:0000315"/>
    <property type="project" value="TAIR"/>
</dbReference>
<dbReference type="GO" id="GO:0009414">
    <property type="term" value="P:response to water deprivation"/>
    <property type="evidence" value="ECO:0000270"/>
    <property type="project" value="TAIR"/>
</dbReference>
<dbReference type="CDD" id="cd01960">
    <property type="entry name" value="nsLTP1"/>
    <property type="match status" value="1"/>
</dbReference>
<dbReference type="FunFam" id="1.10.110.10:FF:000002">
    <property type="entry name" value="Non-specific lipid-transfer protein"/>
    <property type="match status" value="1"/>
</dbReference>
<dbReference type="Gene3D" id="1.10.110.10">
    <property type="entry name" value="Plant lipid-transfer and hydrophobic proteins"/>
    <property type="match status" value="1"/>
</dbReference>
<dbReference type="InterPro" id="IPR036312">
    <property type="entry name" value="Bifun_inhib/LTP/seed_sf"/>
</dbReference>
<dbReference type="InterPro" id="IPR016140">
    <property type="entry name" value="Bifunc_inhib/LTP/seed_store"/>
</dbReference>
<dbReference type="InterPro" id="IPR000528">
    <property type="entry name" value="Plant_nsLTP"/>
</dbReference>
<dbReference type="PANTHER" id="PTHR33076">
    <property type="entry name" value="NON-SPECIFIC LIPID-TRANSFER PROTEIN 2-RELATED"/>
    <property type="match status" value="1"/>
</dbReference>
<dbReference type="Pfam" id="PF00234">
    <property type="entry name" value="Tryp_alpha_amyl"/>
    <property type="match status" value="1"/>
</dbReference>
<dbReference type="PRINTS" id="PR00382">
    <property type="entry name" value="LIPIDTRNSFER"/>
</dbReference>
<dbReference type="SMART" id="SM00499">
    <property type="entry name" value="AAI"/>
    <property type="match status" value="1"/>
</dbReference>
<dbReference type="SUPFAM" id="SSF47699">
    <property type="entry name" value="Bifunctional inhibitor/lipid-transfer protein/seed storage 2S albumin"/>
    <property type="match status" value="1"/>
</dbReference>
<dbReference type="PROSITE" id="PS00597">
    <property type="entry name" value="PLANT_LTP"/>
    <property type="match status" value="1"/>
</dbReference>
<protein>
    <recommendedName>
        <fullName>Non-specific lipid-transfer protein 2</fullName>
        <shortName>LTP 2</shortName>
    </recommendedName>
    <alternativeName>
        <fullName>Protein CELL GROWTH DEFECT FACTOR 3</fullName>
    </alternativeName>
</protein>
<gene>
    <name type="primary">LTP2</name>
    <name type="synonym">CDF3</name>
    <name type="ordered locus">At2g38530</name>
    <name type="ORF">T6A23.27</name>
</gene>
<sequence length="118" mass="11938">MAGVMKLACMVLACMIVAGPITANALMSCGTVNGNLAGCIAYLTRGAPLTQGCCNGVTNLKNMASTTPDRQQACRCLQSAAKAVGPGLNTARAAGLPSACKVNIPYKISASTNCNTVR</sequence>
<keyword id="KW-1015">Disulfide bond</keyword>
<keyword id="KW-0446">Lipid-binding</keyword>
<keyword id="KW-1185">Reference proteome</keyword>
<keyword id="KW-0732">Signal</keyword>
<keyword id="KW-0813">Transport</keyword>
<reference key="1">
    <citation type="journal article" date="1999" name="Plant Cell Physiol.">
        <title>Cell-specific expression of genes of the lipid transfer protein family from Arabidopsis thaliana.</title>
        <authorList>
            <person name="Clark A.M."/>
            <person name="Bohnert H.J."/>
        </authorList>
    </citation>
    <scope>NUCLEOTIDE SEQUENCE [GENOMIC DNA]</scope>
    <source>
        <strain>cv. Wassilewskija</strain>
    </source>
</reference>
<reference key="2">
    <citation type="journal article" date="2000" name="Plant Sci.">
        <title>Lipid transfer proteins are encoded by a small multigene family in Arabidopsis thaliana.</title>
        <authorList>
            <person name="Arondel V.A."/>
            <person name="Vergnolle C."/>
            <person name="Cantrel C."/>
            <person name="Kader J.-C."/>
        </authorList>
    </citation>
    <scope>NUCLEOTIDE SEQUENCE [MRNA]</scope>
    <source>
        <strain>cv. Columbia</strain>
    </source>
</reference>
<reference key="3">
    <citation type="journal article" date="2007" name="J. Microbiol. Biotechnol.">
        <title>Identification of novel mitochondrial membrane protein (Cdf 3) from Arabidopsis thaliana and its functional analysis in a yeast system.</title>
        <authorList>
            <person name="Kim K.-M."/>
            <person name="Jun D.-Y."/>
            <person name="Kim S.-K."/>
            <person name="Kim C.-K."/>
            <person name="Kim B.O."/>
            <person name="Kim Y.-H."/>
            <person name="Park W."/>
            <person name="Sohn J.-K."/>
            <person name="Hirata A."/>
            <person name="Kawai-Yamada M."/>
            <person name="Uchimiya H."/>
            <person name="Kim D.-H."/>
            <person name="Sul I.-W."/>
        </authorList>
    </citation>
    <scope>NUCLEOTIDE SEQUENCE [MRNA]</scope>
</reference>
<reference key="4">
    <citation type="journal article" date="1999" name="Nature">
        <title>Sequence and analysis of chromosome 2 of the plant Arabidopsis thaliana.</title>
        <authorList>
            <person name="Lin X."/>
            <person name="Kaul S."/>
            <person name="Rounsley S.D."/>
            <person name="Shea T.P."/>
            <person name="Benito M.-I."/>
            <person name="Town C.D."/>
            <person name="Fujii C.Y."/>
            <person name="Mason T.M."/>
            <person name="Bowman C.L."/>
            <person name="Barnstead M.E."/>
            <person name="Feldblyum T.V."/>
            <person name="Buell C.R."/>
            <person name="Ketchum K.A."/>
            <person name="Lee J.J."/>
            <person name="Ronning C.M."/>
            <person name="Koo H.L."/>
            <person name="Moffat K.S."/>
            <person name="Cronin L.A."/>
            <person name="Shen M."/>
            <person name="Pai G."/>
            <person name="Van Aken S."/>
            <person name="Umayam L."/>
            <person name="Tallon L.J."/>
            <person name="Gill J.E."/>
            <person name="Adams M.D."/>
            <person name="Carrera A.J."/>
            <person name="Creasy T.H."/>
            <person name="Goodman H.M."/>
            <person name="Somerville C.R."/>
            <person name="Copenhaver G.P."/>
            <person name="Preuss D."/>
            <person name="Nierman W.C."/>
            <person name="White O."/>
            <person name="Eisen J.A."/>
            <person name="Salzberg S.L."/>
            <person name="Fraser C.M."/>
            <person name="Venter J.C."/>
        </authorList>
    </citation>
    <scope>NUCLEOTIDE SEQUENCE [LARGE SCALE GENOMIC DNA]</scope>
    <source>
        <strain>cv. Columbia</strain>
    </source>
</reference>
<reference key="5">
    <citation type="journal article" date="2017" name="Plant J.">
        <title>Araport11: a complete reannotation of the Arabidopsis thaliana reference genome.</title>
        <authorList>
            <person name="Cheng C.Y."/>
            <person name="Krishnakumar V."/>
            <person name="Chan A.P."/>
            <person name="Thibaud-Nissen F."/>
            <person name="Schobel S."/>
            <person name="Town C.D."/>
        </authorList>
    </citation>
    <scope>GENOME REANNOTATION</scope>
    <source>
        <strain>cv. Columbia</strain>
    </source>
</reference>
<reference key="6">
    <citation type="journal article" date="2003" name="Science">
        <title>Empirical analysis of transcriptional activity in the Arabidopsis genome.</title>
        <authorList>
            <person name="Yamada K."/>
            <person name="Lim J."/>
            <person name="Dale J.M."/>
            <person name="Chen H."/>
            <person name="Shinn P."/>
            <person name="Palm C.J."/>
            <person name="Southwick A.M."/>
            <person name="Wu H.C."/>
            <person name="Kim C.J."/>
            <person name="Nguyen M."/>
            <person name="Pham P.K."/>
            <person name="Cheuk R.F."/>
            <person name="Karlin-Newmann G."/>
            <person name="Liu S.X."/>
            <person name="Lam B."/>
            <person name="Sakano H."/>
            <person name="Wu T."/>
            <person name="Yu G."/>
            <person name="Miranda M."/>
            <person name="Quach H.L."/>
            <person name="Tripp M."/>
            <person name="Chang C.H."/>
            <person name="Lee J.M."/>
            <person name="Toriumi M.J."/>
            <person name="Chan M.M."/>
            <person name="Tang C.C."/>
            <person name="Onodera C.S."/>
            <person name="Deng J.M."/>
            <person name="Akiyama K."/>
            <person name="Ansari Y."/>
            <person name="Arakawa T."/>
            <person name="Banh J."/>
            <person name="Banno F."/>
            <person name="Bowser L."/>
            <person name="Brooks S.Y."/>
            <person name="Carninci P."/>
            <person name="Chao Q."/>
            <person name="Choy N."/>
            <person name="Enju A."/>
            <person name="Goldsmith A.D."/>
            <person name="Gurjal M."/>
            <person name="Hansen N.F."/>
            <person name="Hayashizaki Y."/>
            <person name="Johnson-Hopson C."/>
            <person name="Hsuan V.W."/>
            <person name="Iida K."/>
            <person name="Karnes M."/>
            <person name="Khan S."/>
            <person name="Koesema E."/>
            <person name="Ishida J."/>
            <person name="Jiang P.X."/>
            <person name="Jones T."/>
            <person name="Kawai J."/>
            <person name="Kamiya A."/>
            <person name="Meyers C."/>
            <person name="Nakajima M."/>
            <person name="Narusaka M."/>
            <person name="Seki M."/>
            <person name="Sakurai T."/>
            <person name="Satou M."/>
            <person name="Tamse R."/>
            <person name="Vaysberg M."/>
            <person name="Wallender E.K."/>
            <person name="Wong C."/>
            <person name="Yamamura Y."/>
            <person name="Yuan S."/>
            <person name="Shinozaki K."/>
            <person name="Davis R.W."/>
            <person name="Theologis A."/>
            <person name="Ecker J.R."/>
        </authorList>
    </citation>
    <scope>NUCLEOTIDE SEQUENCE [LARGE SCALE MRNA]</scope>
    <source>
        <strain>cv. Columbia</strain>
    </source>
</reference>
<reference key="7">
    <citation type="submission" date="2002-03" db="EMBL/GenBank/DDBJ databases">
        <title>Full-length cDNA from Arabidopsis thaliana.</title>
        <authorList>
            <person name="Brover V.V."/>
            <person name="Troukhan M.E."/>
            <person name="Alexandrov N.A."/>
            <person name="Lu Y.-P."/>
            <person name="Flavell R.B."/>
            <person name="Feldmann K.A."/>
        </authorList>
    </citation>
    <scope>NUCLEOTIDE SEQUENCE [LARGE SCALE MRNA]</scope>
</reference>
<reference key="8">
    <citation type="journal article" date="1993" name="Plant J.">
        <title>An inventory of 1152 expressed sequence tags obtained by partial sequencing of cDNAs from Arabidopsis thaliana.</title>
        <authorList>
            <person name="Hoefte H."/>
            <person name="Desprez T."/>
            <person name="Amselem J."/>
            <person name="Chiapello H."/>
            <person name="Rouze P."/>
            <person name="Caboche M."/>
            <person name="Moisan A."/>
            <person name="Jourjon M.-F."/>
            <person name="Charpenteau J.-L."/>
            <person name="Berthomieu P."/>
            <person name="Guerrier D."/>
            <person name="Giraudat J."/>
            <person name="Quigley F."/>
            <person name="Thomas F."/>
            <person name="Yu D.-Y."/>
            <person name="Mache R."/>
            <person name="Raynal M."/>
            <person name="Cooke R."/>
            <person name="Grellet F."/>
            <person name="Delseny M."/>
            <person name="Parmentier Y."/>
            <person name="de Marcillac G."/>
            <person name="Gigot C."/>
            <person name="Fleck J."/>
            <person name="Philipps G."/>
            <person name="Axelos M."/>
            <person name="Bardet C."/>
            <person name="Tremousaygue D."/>
            <person name="Lescure B."/>
        </authorList>
    </citation>
    <scope>NUCLEOTIDE SEQUENCE [LARGE SCALE MRNA] OF 1-79; 51-118 AND 69-118</scope>
    <source>
        <strain>cv. Columbia</strain>
        <tissue>Green siliques</tissue>
    </source>
</reference>
<reference key="9">
    <citation type="journal article" date="2008" name="Plant Physiol. Biochem.">
        <title>Plant pathogenesis-related (PR) proteins: a focus on PR peptides.</title>
        <authorList>
            <person name="Sels J."/>
            <person name="Mathys J."/>
            <person name="De Coninck B.M.A."/>
            <person name="Cammue B.P.A."/>
            <person name="De Bolle M.F.C."/>
        </authorList>
    </citation>
    <scope>GENE FAMILY</scope>
    <scope>NOMENCLATURE</scope>
</reference>